<dbReference type="EMBL" id="CP000910">
    <property type="protein sequence ID" value="ABY23884.1"/>
    <property type="molecule type" value="Genomic_DNA"/>
</dbReference>
<dbReference type="RefSeq" id="WP_012245550.1">
    <property type="nucleotide sequence ID" value="NC_010168.1"/>
</dbReference>
<dbReference type="SMR" id="A9WSU6"/>
<dbReference type="STRING" id="288705.RSal33209_2152"/>
<dbReference type="KEGG" id="rsa:RSal33209_2152"/>
<dbReference type="eggNOG" id="COG0198">
    <property type="taxonomic scope" value="Bacteria"/>
</dbReference>
<dbReference type="HOGENOM" id="CLU_093315_2_0_11"/>
<dbReference type="Proteomes" id="UP000002007">
    <property type="component" value="Chromosome"/>
</dbReference>
<dbReference type="GO" id="GO:1990904">
    <property type="term" value="C:ribonucleoprotein complex"/>
    <property type="evidence" value="ECO:0007669"/>
    <property type="project" value="UniProtKB-KW"/>
</dbReference>
<dbReference type="GO" id="GO:0005840">
    <property type="term" value="C:ribosome"/>
    <property type="evidence" value="ECO:0007669"/>
    <property type="project" value="UniProtKB-KW"/>
</dbReference>
<dbReference type="GO" id="GO:0019843">
    <property type="term" value="F:rRNA binding"/>
    <property type="evidence" value="ECO:0007669"/>
    <property type="project" value="UniProtKB-UniRule"/>
</dbReference>
<dbReference type="GO" id="GO:0003735">
    <property type="term" value="F:structural constituent of ribosome"/>
    <property type="evidence" value="ECO:0007669"/>
    <property type="project" value="InterPro"/>
</dbReference>
<dbReference type="GO" id="GO:0006412">
    <property type="term" value="P:translation"/>
    <property type="evidence" value="ECO:0007669"/>
    <property type="project" value="UniProtKB-UniRule"/>
</dbReference>
<dbReference type="CDD" id="cd06089">
    <property type="entry name" value="KOW_RPL26"/>
    <property type="match status" value="1"/>
</dbReference>
<dbReference type="Gene3D" id="2.30.30.30">
    <property type="match status" value="1"/>
</dbReference>
<dbReference type="HAMAP" id="MF_01326_B">
    <property type="entry name" value="Ribosomal_uL24_B"/>
    <property type="match status" value="1"/>
</dbReference>
<dbReference type="InterPro" id="IPR014722">
    <property type="entry name" value="Rib_uL2_dom2"/>
</dbReference>
<dbReference type="InterPro" id="IPR003256">
    <property type="entry name" value="Ribosomal_uL24"/>
</dbReference>
<dbReference type="InterPro" id="IPR041988">
    <property type="entry name" value="Ribosomal_uL24_KOW"/>
</dbReference>
<dbReference type="InterPro" id="IPR008991">
    <property type="entry name" value="Translation_prot_SH3-like_sf"/>
</dbReference>
<dbReference type="NCBIfam" id="TIGR01079">
    <property type="entry name" value="rplX_bact"/>
    <property type="match status" value="1"/>
</dbReference>
<dbReference type="PANTHER" id="PTHR12903">
    <property type="entry name" value="MITOCHONDRIAL RIBOSOMAL PROTEIN L24"/>
    <property type="match status" value="1"/>
</dbReference>
<dbReference type="Pfam" id="PF17136">
    <property type="entry name" value="ribosomal_L24"/>
    <property type="match status" value="1"/>
</dbReference>
<dbReference type="SUPFAM" id="SSF50104">
    <property type="entry name" value="Translation proteins SH3-like domain"/>
    <property type="match status" value="1"/>
</dbReference>
<evidence type="ECO:0000255" key="1">
    <source>
        <dbReference type="HAMAP-Rule" id="MF_01326"/>
    </source>
</evidence>
<evidence type="ECO:0000305" key="2"/>
<comment type="function">
    <text evidence="1">One of two assembly initiator proteins, it binds directly to the 5'-end of the 23S rRNA, where it nucleates assembly of the 50S subunit.</text>
</comment>
<comment type="function">
    <text evidence="1">One of the proteins that surrounds the polypeptide exit tunnel on the outside of the subunit.</text>
</comment>
<comment type="subunit">
    <text evidence="1">Part of the 50S ribosomal subunit.</text>
</comment>
<comment type="similarity">
    <text evidence="1">Belongs to the universal ribosomal protein uL24 family.</text>
</comment>
<organism>
    <name type="scientific">Renibacterium salmoninarum (strain ATCC 33209 / DSM 20767 / JCM 11484 / NBRC 15589 / NCIMB 2235)</name>
    <dbReference type="NCBI Taxonomy" id="288705"/>
    <lineage>
        <taxon>Bacteria</taxon>
        <taxon>Bacillati</taxon>
        <taxon>Actinomycetota</taxon>
        <taxon>Actinomycetes</taxon>
        <taxon>Micrococcales</taxon>
        <taxon>Micrococcaceae</taxon>
        <taxon>Renibacterium</taxon>
    </lineage>
</organism>
<proteinExistence type="inferred from homology"/>
<gene>
    <name evidence="1" type="primary">rplX</name>
    <name type="ordered locus">RSal33209_2152</name>
</gene>
<name>RL24_RENSM</name>
<sequence>MGKINIKKGDLVQVITGAKAERGGDRGKQGKVLRVFTESNRVLVEGINRVTKHTKVGQSQRGSKTGGIEIVEAPIHISNVALVDPSTKKTTRVGYRLETVERDGRERVTRVRFAKSSGKDLA</sequence>
<protein>
    <recommendedName>
        <fullName evidence="1">Large ribosomal subunit protein uL24</fullName>
    </recommendedName>
    <alternativeName>
        <fullName evidence="2">50S ribosomal protein L24</fullName>
    </alternativeName>
</protein>
<keyword id="KW-1185">Reference proteome</keyword>
<keyword id="KW-0687">Ribonucleoprotein</keyword>
<keyword id="KW-0689">Ribosomal protein</keyword>
<keyword id="KW-0694">RNA-binding</keyword>
<keyword id="KW-0699">rRNA-binding</keyword>
<reference key="1">
    <citation type="journal article" date="2008" name="J. Bacteriol.">
        <title>Genome sequence of the fish pathogen Renibacterium salmoninarum suggests reductive evolution away from an environmental Arthrobacter ancestor.</title>
        <authorList>
            <person name="Wiens G.D."/>
            <person name="Rockey D.D."/>
            <person name="Wu Z."/>
            <person name="Chang J."/>
            <person name="Levy R."/>
            <person name="Crane S."/>
            <person name="Chen D.S."/>
            <person name="Capri G.R."/>
            <person name="Burnett J.R."/>
            <person name="Sudheesh P.S."/>
            <person name="Schipma M.J."/>
            <person name="Burd H."/>
            <person name="Bhattacharyya A."/>
            <person name="Rhodes L.D."/>
            <person name="Kaul R."/>
            <person name="Strom M.S."/>
        </authorList>
    </citation>
    <scope>NUCLEOTIDE SEQUENCE [LARGE SCALE GENOMIC DNA]</scope>
    <source>
        <strain>ATCC 33209 / DSM 20767 / JCM 11484 / NBRC 15589 / NCIMB 2235</strain>
    </source>
</reference>
<accession>A9WSU6</accession>
<feature type="chain" id="PRO_0000355714" description="Large ribosomal subunit protein uL24">
    <location>
        <begin position="1"/>
        <end position="122"/>
    </location>
</feature>